<comment type="function">
    <text evidence="1">Catalyzes the ATP-dependent amination of UTP to CTP with either L-glutamine or ammonia as the source of nitrogen. Regulates intracellular CTP levels through interactions with the four ribonucleotide triphosphates.</text>
</comment>
<comment type="catalytic activity">
    <reaction evidence="1">
        <text>UTP + L-glutamine + ATP + H2O = CTP + L-glutamate + ADP + phosphate + 2 H(+)</text>
        <dbReference type="Rhea" id="RHEA:26426"/>
        <dbReference type="ChEBI" id="CHEBI:15377"/>
        <dbReference type="ChEBI" id="CHEBI:15378"/>
        <dbReference type="ChEBI" id="CHEBI:29985"/>
        <dbReference type="ChEBI" id="CHEBI:30616"/>
        <dbReference type="ChEBI" id="CHEBI:37563"/>
        <dbReference type="ChEBI" id="CHEBI:43474"/>
        <dbReference type="ChEBI" id="CHEBI:46398"/>
        <dbReference type="ChEBI" id="CHEBI:58359"/>
        <dbReference type="ChEBI" id="CHEBI:456216"/>
        <dbReference type="EC" id="6.3.4.2"/>
    </reaction>
</comment>
<comment type="catalytic activity">
    <reaction evidence="1">
        <text>L-glutamine + H2O = L-glutamate + NH4(+)</text>
        <dbReference type="Rhea" id="RHEA:15889"/>
        <dbReference type="ChEBI" id="CHEBI:15377"/>
        <dbReference type="ChEBI" id="CHEBI:28938"/>
        <dbReference type="ChEBI" id="CHEBI:29985"/>
        <dbReference type="ChEBI" id="CHEBI:58359"/>
    </reaction>
</comment>
<comment type="catalytic activity">
    <reaction evidence="1">
        <text>UTP + NH4(+) + ATP = CTP + ADP + phosphate + 2 H(+)</text>
        <dbReference type="Rhea" id="RHEA:16597"/>
        <dbReference type="ChEBI" id="CHEBI:15378"/>
        <dbReference type="ChEBI" id="CHEBI:28938"/>
        <dbReference type="ChEBI" id="CHEBI:30616"/>
        <dbReference type="ChEBI" id="CHEBI:37563"/>
        <dbReference type="ChEBI" id="CHEBI:43474"/>
        <dbReference type="ChEBI" id="CHEBI:46398"/>
        <dbReference type="ChEBI" id="CHEBI:456216"/>
    </reaction>
</comment>
<comment type="activity regulation">
    <text evidence="1">Allosterically activated by GTP, when glutamine is the substrate; GTP has no effect on the reaction when ammonia is the substrate. The allosteric effector GTP functions by stabilizing the protein conformation that binds the tetrahedral intermediate(s) formed during glutamine hydrolysis. Inhibited by the product CTP, via allosteric rather than competitive inhibition.</text>
</comment>
<comment type="pathway">
    <text evidence="1">Pyrimidine metabolism; CTP biosynthesis via de novo pathway; CTP from UDP: step 2/2.</text>
</comment>
<comment type="subunit">
    <text evidence="1">Homotetramer.</text>
</comment>
<comment type="miscellaneous">
    <text evidence="1">CTPSs have evolved a hybrid strategy for distinguishing between UTP and CTP. The overlapping regions of the product feedback inhibitory and substrate sites recognize a common feature in both compounds, the triphosphate moiety. To differentiate isosteric substrate and product pyrimidine rings, an additional pocket far from the expected kinase/ligase catalytic site, specifically recognizes the cytosine and ribose portions of the product inhibitor.</text>
</comment>
<comment type="similarity">
    <text evidence="1">Belongs to the CTP synthase family.</text>
</comment>
<dbReference type="EC" id="6.3.4.2" evidence="1"/>
<dbReference type="EMBL" id="CP001635">
    <property type="protein sequence ID" value="ACS20060.1"/>
    <property type="molecule type" value="Genomic_DNA"/>
</dbReference>
<dbReference type="SMR" id="C5CSV3"/>
<dbReference type="STRING" id="543728.Vapar_3443"/>
<dbReference type="KEGG" id="vap:Vapar_3443"/>
<dbReference type="eggNOG" id="COG0504">
    <property type="taxonomic scope" value="Bacteria"/>
</dbReference>
<dbReference type="HOGENOM" id="CLU_011675_5_0_4"/>
<dbReference type="OrthoDB" id="9801107at2"/>
<dbReference type="UniPathway" id="UPA00159">
    <property type="reaction ID" value="UER00277"/>
</dbReference>
<dbReference type="GO" id="GO:0005829">
    <property type="term" value="C:cytosol"/>
    <property type="evidence" value="ECO:0007669"/>
    <property type="project" value="TreeGrafter"/>
</dbReference>
<dbReference type="GO" id="GO:0005524">
    <property type="term" value="F:ATP binding"/>
    <property type="evidence" value="ECO:0007669"/>
    <property type="project" value="UniProtKB-KW"/>
</dbReference>
<dbReference type="GO" id="GO:0003883">
    <property type="term" value="F:CTP synthase activity"/>
    <property type="evidence" value="ECO:0007669"/>
    <property type="project" value="UniProtKB-UniRule"/>
</dbReference>
<dbReference type="GO" id="GO:0004359">
    <property type="term" value="F:glutaminase activity"/>
    <property type="evidence" value="ECO:0007669"/>
    <property type="project" value="RHEA"/>
</dbReference>
<dbReference type="GO" id="GO:0042802">
    <property type="term" value="F:identical protein binding"/>
    <property type="evidence" value="ECO:0007669"/>
    <property type="project" value="TreeGrafter"/>
</dbReference>
<dbReference type="GO" id="GO:0046872">
    <property type="term" value="F:metal ion binding"/>
    <property type="evidence" value="ECO:0007669"/>
    <property type="project" value="UniProtKB-KW"/>
</dbReference>
<dbReference type="GO" id="GO:0044210">
    <property type="term" value="P:'de novo' CTP biosynthetic process"/>
    <property type="evidence" value="ECO:0007669"/>
    <property type="project" value="UniProtKB-UniRule"/>
</dbReference>
<dbReference type="GO" id="GO:0019856">
    <property type="term" value="P:pyrimidine nucleobase biosynthetic process"/>
    <property type="evidence" value="ECO:0007669"/>
    <property type="project" value="TreeGrafter"/>
</dbReference>
<dbReference type="CDD" id="cd03113">
    <property type="entry name" value="CTPS_N"/>
    <property type="match status" value="1"/>
</dbReference>
<dbReference type="CDD" id="cd01746">
    <property type="entry name" value="GATase1_CTP_Synthase"/>
    <property type="match status" value="1"/>
</dbReference>
<dbReference type="FunFam" id="3.40.50.300:FF:000009">
    <property type="entry name" value="CTP synthase"/>
    <property type="match status" value="1"/>
</dbReference>
<dbReference type="FunFam" id="3.40.50.880:FF:000002">
    <property type="entry name" value="CTP synthase"/>
    <property type="match status" value="1"/>
</dbReference>
<dbReference type="Gene3D" id="3.40.50.880">
    <property type="match status" value="1"/>
</dbReference>
<dbReference type="Gene3D" id="3.40.50.300">
    <property type="entry name" value="P-loop containing nucleotide triphosphate hydrolases"/>
    <property type="match status" value="1"/>
</dbReference>
<dbReference type="HAMAP" id="MF_01227">
    <property type="entry name" value="PyrG"/>
    <property type="match status" value="1"/>
</dbReference>
<dbReference type="InterPro" id="IPR029062">
    <property type="entry name" value="Class_I_gatase-like"/>
</dbReference>
<dbReference type="InterPro" id="IPR004468">
    <property type="entry name" value="CTP_synthase"/>
</dbReference>
<dbReference type="InterPro" id="IPR017456">
    <property type="entry name" value="CTP_synthase_N"/>
</dbReference>
<dbReference type="InterPro" id="IPR017926">
    <property type="entry name" value="GATASE"/>
</dbReference>
<dbReference type="InterPro" id="IPR033828">
    <property type="entry name" value="GATase1_CTP_Synthase"/>
</dbReference>
<dbReference type="InterPro" id="IPR027417">
    <property type="entry name" value="P-loop_NTPase"/>
</dbReference>
<dbReference type="NCBIfam" id="NF003792">
    <property type="entry name" value="PRK05380.1"/>
    <property type="match status" value="1"/>
</dbReference>
<dbReference type="NCBIfam" id="TIGR00337">
    <property type="entry name" value="PyrG"/>
    <property type="match status" value="1"/>
</dbReference>
<dbReference type="PANTHER" id="PTHR11550">
    <property type="entry name" value="CTP SYNTHASE"/>
    <property type="match status" value="1"/>
</dbReference>
<dbReference type="PANTHER" id="PTHR11550:SF0">
    <property type="entry name" value="CTP SYNTHASE-RELATED"/>
    <property type="match status" value="1"/>
</dbReference>
<dbReference type="Pfam" id="PF06418">
    <property type="entry name" value="CTP_synth_N"/>
    <property type="match status" value="1"/>
</dbReference>
<dbReference type="Pfam" id="PF00117">
    <property type="entry name" value="GATase"/>
    <property type="match status" value="1"/>
</dbReference>
<dbReference type="SUPFAM" id="SSF52317">
    <property type="entry name" value="Class I glutamine amidotransferase-like"/>
    <property type="match status" value="1"/>
</dbReference>
<dbReference type="SUPFAM" id="SSF52540">
    <property type="entry name" value="P-loop containing nucleoside triphosphate hydrolases"/>
    <property type="match status" value="1"/>
</dbReference>
<dbReference type="PROSITE" id="PS51273">
    <property type="entry name" value="GATASE_TYPE_1"/>
    <property type="match status" value="1"/>
</dbReference>
<name>PYRG_VARPS</name>
<sequence length="559" mass="61618">MTKFVFVTGGVVSSLGKGIASASLAAILESRGLKVTLIKLDPYINVDPGTMSPFQHGEVFVTDDGAETDLDLGHYERFITTRMRKANNFTTGQIYKTVLEKERRGDYLGKTVQVIPHITNEIQEYIKRGAGLGTAHEVDVAIVEIGGTVGDIESLPFLEAVRQMSLRMGPNNSAFVHLSYVPWIAAAGELKTKPTQHTAKELRAIGIQADALLCRADRPIPDDERAKISLFSNVPEWGVISMWDVDTIYKVPRMLHEQGLDGLICDKLRINTPPAKLQRWDELVYEVEHPQQEVSIAMVGKYVDLSDSYKSLNEALRHAGMKNHARVKIDYIDSETISPQDVSRLAKYDAILVPGGFGQRGVEGKISAARFAREGKVPYLGICLGMQVATIEYARHVAGLKNANSTEFDPETPCPVIALITEWKDADGTVKTRNEKSDLGGTMRLGAQSSDVSAGTLAHSIYGDVVTERHRHRYEANVNYLDELRAAGLVISALTQREHLTEIVELPQDVHPWFMGVQFHPEFKSTPWSGHPLFNAFIKAALDHKARSAGGAKNLKAVA</sequence>
<accession>C5CSV3</accession>
<feature type="chain" id="PRO_1000214020" description="CTP synthase">
    <location>
        <begin position="1"/>
        <end position="559"/>
    </location>
</feature>
<feature type="domain" description="Glutamine amidotransferase type-1" evidence="1">
    <location>
        <begin position="295"/>
        <end position="547"/>
    </location>
</feature>
<feature type="region of interest" description="Amidoligase domain" evidence="1">
    <location>
        <begin position="1"/>
        <end position="270"/>
    </location>
</feature>
<feature type="active site" description="Nucleophile; for glutamine hydrolysis" evidence="1">
    <location>
        <position position="383"/>
    </location>
</feature>
<feature type="active site" evidence="1">
    <location>
        <position position="520"/>
    </location>
</feature>
<feature type="active site" evidence="1">
    <location>
        <position position="522"/>
    </location>
</feature>
<feature type="binding site" evidence="1">
    <location>
        <position position="13"/>
    </location>
    <ligand>
        <name>CTP</name>
        <dbReference type="ChEBI" id="CHEBI:37563"/>
        <note>allosteric inhibitor</note>
    </ligand>
</feature>
<feature type="binding site" evidence="1">
    <location>
        <position position="13"/>
    </location>
    <ligand>
        <name>UTP</name>
        <dbReference type="ChEBI" id="CHEBI:46398"/>
    </ligand>
</feature>
<feature type="binding site" evidence="1">
    <location>
        <begin position="14"/>
        <end position="19"/>
    </location>
    <ligand>
        <name>ATP</name>
        <dbReference type="ChEBI" id="CHEBI:30616"/>
    </ligand>
</feature>
<feature type="binding site" evidence="1">
    <location>
        <position position="71"/>
    </location>
    <ligand>
        <name>ATP</name>
        <dbReference type="ChEBI" id="CHEBI:30616"/>
    </ligand>
</feature>
<feature type="binding site" evidence="1">
    <location>
        <position position="71"/>
    </location>
    <ligand>
        <name>Mg(2+)</name>
        <dbReference type="ChEBI" id="CHEBI:18420"/>
    </ligand>
</feature>
<feature type="binding site" evidence="1">
    <location>
        <position position="144"/>
    </location>
    <ligand>
        <name>Mg(2+)</name>
        <dbReference type="ChEBI" id="CHEBI:18420"/>
    </ligand>
</feature>
<feature type="binding site" evidence="1">
    <location>
        <begin position="151"/>
        <end position="153"/>
    </location>
    <ligand>
        <name>CTP</name>
        <dbReference type="ChEBI" id="CHEBI:37563"/>
        <note>allosteric inhibitor</note>
    </ligand>
</feature>
<feature type="binding site" evidence="1">
    <location>
        <begin position="191"/>
        <end position="196"/>
    </location>
    <ligand>
        <name>CTP</name>
        <dbReference type="ChEBI" id="CHEBI:37563"/>
        <note>allosteric inhibitor</note>
    </ligand>
</feature>
<feature type="binding site" evidence="1">
    <location>
        <begin position="191"/>
        <end position="196"/>
    </location>
    <ligand>
        <name>UTP</name>
        <dbReference type="ChEBI" id="CHEBI:46398"/>
    </ligand>
</feature>
<feature type="binding site" evidence="1">
    <location>
        <position position="227"/>
    </location>
    <ligand>
        <name>CTP</name>
        <dbReference type="ChEBI" id="CHEBI:37563"/>
        <note>allosteric inhibitor</note>
    </ligand>
</feature>
<feature type="binding site" evidence="1">
    <location>
        <position position="227"/>
    </location>
    <ligand>
        <name>UTP</name>
        <dbReference type="ChEBI" id="CHEBI:46398"/>
    </ligand>
</feature>
<feature type="binding site" evidence="1">
    <location>
        <position position="356"/>
    </location>
    <ligand>
        <name>L-glutamine</name>
        <dbReference type="ChEBI" id="CHEBI:58359"/>
    </ligand>
</feature>
<feature type="binding site" evidence="1">
    <location>
        <begin position="384"/>
        <end position="387"/>
    </location>
    <ligand>
        <name>L-glutamine</name>
        <dbReference type="ChEBI" id="CHEBI:58359"/>
    </ligand>
</feature>
<feature type="binding site" evidence="1">
    <location>
        <position position="407"/>
    </location>
    <ligand>
        <name>L-glutamine</name>
        <dbReference type="ChEBI" id="CHEBI:58359"/>
    </ligand>
</feature>
<feature type="binding site" evidence="1">
    <location>
        <position position="473"/>
    </location>
    <ligand>
        <name>L-glutamine</name>
        <dbReference type="ChEBI" id="CHEBI:58359"/>
    </ligand>
</feature>
<evidence type="ECO:0000255" key="1">
    <source>
        <dbReference type="HAMAP-Rule" id="MF_01227"/>
    </source>
</evidence>
<gene>
    <name evidence="1" type="primary">pyrG</name>
    <name type="ordered locus">Vapar_3443</name>
</gene>
<proteinExistence type="inferred from homology"/>
<organism>
    <name type="scientific">Variovorax paradoxus (strain S110)</name>
    <dbReference type="NCBI Taxonomy" id="543728"/>
    <lineage>
        <taxon>Bacteria</taxon>
        <taxon>Pseudomonadati</taxon>
        <taxon>Pseudomonadota</taxon>
        <taxon>Betaproteobacteria</taxon>
        <taxon>Burkholderiales</taxon>
        <taxon>Comamonadaceae</taxon>
        <taxon>Variovorax</taxon>
    </lineage>
</organism>
<protein>
    <recommendedName>
        <fullName evidence="1">CTP synthase</fullName>
        <ecNumber evidence="1">6.3.4.2</ecNumber>
    </recommendedName>
    <alternativeName>
        <fullName evidence="1">Cytidine 5'-triphosphate synthase</fullName>
    </alternativeName>
    <alternativeName>
        <fullName evidence="1">Cytidine triphosphate synthetase</fullName>
        <shortName evidence="1">CTP synthetase</shortName>
        <shortName evidence="1">CTPS</shortName>
    </alternativeName>
    <alternativeName>
        <fullName evidence="1">UTP--ammonia ligase</fullName>
    </alternativeName>
</protein>
<keyword id="KW-0067">ATP-binding</keyword>
<keyword id="KW-0315">Glutamine amidotransferase</keyword>
<keyword id="KW-0436">Ligase</keyword>
<keyword id="KW-0460">Magnesium</keyword>
<keyword id="KW-0479">Metal-binding</keyword>
<keyword id="KW-0547">Nucleotide-binding</keyword>
<keyword id="KW-0665">Pyrimidine biosynthesis</keyword>
<reference key="1">
    <citation type="journal article" date="2011" name="J. Bacteriol.">
        <title>Complete genome sequence of the metabolically versatile plant growth-promoting endophyte, Variovorax paradoxus S110.</title>
        <authorList>
            <person name="Han J.I."/>
            <person name="Choi H.K."/>
            <person name="Lee S.W."/>
            <person name="Orwin P.M."/>
            <person name="Kim J."/>
            <person name="Laroe S.L."/>
            <person name="Kim T.G."/>
            <person name="O'Neil J."/>
            <person name="Leadbetter J.R."/>
            <person name="Lee S.Y."/>
            <person name="Hur C.G."/>
            <person name="Spain J.C."/>
            <person name="Ovchinnikova G."/>
            <person name="Goodwin L."/>
            <person name="Han C."/>
        </authorList>
    </citation>
    <scope>NUCLEOTIDE SEQUENCE [LARGE SCALE GENOMIC DNA]</scope>
    <source>
        <strain>S110</strain>
    </source>
</reference>